<gene>
    <name type="primary">GLI1</name>
    <name type="synonym">GLI</name>
</gene>
<proteinExistence type="evidence at protein level"/>
<keyword id="KW-0002">3D-structure</keyword>
<keyword id="KW-0007">Acetylation</keyword>
<keyword id="KW-0010">Activator</keyword>
<keyword id="KW-0025">Alternative splicing</keyword>
<keyword id="KW-0963">Cytoplasm</keyword>
<keyword id="KW-0217">Developmental protein</keyword>
<keyword id="KW-0221">Differentiation</keyword>
<keyword id="KW-0225">Disease variant</keyword>
<keyword id="KW-0238">DNA-binding</keyword>
<keyword id="KW-1017">Isopeptide bond</keyword>
<keyword id="KW-0479">Metal-binding</keyword>
<keyword id="KW-0539">Nucleus</keyword>
<keyword id="KW-0597">Phosphoprotein</keyword>
<keyword id="KW-1267">Proteomics identification</keyword>
<keyword id="KW-0656">Proto-oncogene</keyword>
<keyword id="KW-1185">Reference proteome</keyword>
<keyword id="KW-0677">Repeat</keyword>
<keyword id="KW-0804">Transcription</keyword>
<keyword id="KW-0805">Transcription regulation</keyword>
<keyword id="KW-0832">Ubl conjugation</keyword>
<keyword id="KW-0862">Zinc</keyword>
<keyword id="KW-0863">Zinc-finger</keyword>
<protein>
    <recommendedName>
        <fullName>Zinc finger protein GLI1</fullName>
    </recommendedName>
    <alternativeName>
        <fullName>Glioma-associated oncogene</fullName>
    </alternativeName>
    <alternativeName>
        <fullName>Oncogene GLI</fullName>
    </alternativeName>
</protein>
<comment type="function">
    <text evidence="5 7 9 10 12 13 14 15 17 19">Acts as a transcriptional activator (PubMed:10806483, PubMed:19706761, PubMed:19878745, PubMed:24076122, PubMed:24217340, PubMed:24311597). Binds to the DNA consensus sequence 5'-GACCACCCA-3' (PubMed:2105456, PubMed:24217340, PubMed:8378770). Regulates the transcription of specific genes during normal development (PubMed:19706761). Plays a role in craniofacial development and digital development, as well as development of the central nervous system and gastrointestinal tract. Mediates SHH signaling (PubMed:19706761, PubMed:28973407). Plays a role in cell proliferation and differentiation via its role in SHH signaling (PubMed:11238441, PubMed:28973407).</text>
</comment>
<comment type="function">
    <molecule>Isoform 2</molecule>
    <text evidence="9">Acts as a transcriptional activator, but activates a different set of genes than isoform 1. Activates expression of CD24, unlike isoform 1. Mediates SHH signaling. Promotes cancer cell migration.</text>
</comment>
<comment type="subunit">
    <text evidence="2 5 7 14 15 16">Interacts with KIF7 (By similarity). Interacts with STK36 (PubMed:10806483). Interacts with ZIC1; the interaction enhances transcription activation (PubMed:11238441). Interacts with SUFU; this inhibits transcriptional activation by GLI1 (PubMed:10806483, PubMed:24217340, PubMed:24311597, PubMed:28965847).</text>
</comment>
<comment type="interaction">
    <interactant intactId="EBI-308084">
        <id>P08151</id>
    </interactant>
    <interactant intactId="EBI-745213">
        <id>P29972</id>
        <label>AQP1</label>
    </interactant>
    <organismsDiffer>false</organismsDiffer>
    <experiments>3</experiments>
</comment>
<comment type="interaction">
    <interactant intactId="EBI-308084">
        <id>P08151</id>
    </interactant>
    <interactant intactId="EBI-744545">
        <id>Q8NEC5</id>
        <label>CATSPER1</label>
    </interactant>
    <organismsDiffer>false</organismsDiffer>
    <experiments>3</experiments>
</comment>
<comment type="interaction">
    <interactant intactId="EBI-308084">
        <id>P08151</id>
    </interactant>
    <interactant intactId="EBI-7519711">
        <id>P53673</id>
        <label>CRYBA4</label>
    </interactant>
    <organismsDiffer>false</organismsDiffer>
    <experiments>3</experiments>
</comment>
<comment type="interaction">
    <interactant intactId="EBI-308084">
        <id>P08151</id>
    </interactant>
    <interactant intactId="EBI-746252">
        <id>Q96CN9</id>
        <label>GCC1</label>
    </interactant>
    <organismsDiffer>false</organismsDiffer>
    <experiments>3</experiments>
</comment>
<comment type="interaction">
    <interactant intactId="EBI-308084">
        <id>P08151</id>
    </interactant>
    <interactant intactId="EBI-1564678">
        <id>Q96J02</id>
        <label>ITCH</label>
    </interactant>
    <organismsDiffer>false</organismsDiffer>
    <experiments>4</experiments>
</comment>
<comment type="interaction">
    <interactant intactId="EBI-308084">
        <id>P08151</id>
    </interactant>
    <interactant intactId="EBI-714158">
        <id>Q13526</id>
        <label>PIN1</label>
    </interactant>
    <organismsDiffer>false</organismsDiffer>
    <experiments>3</experiments>
</comment>
<comment type="interaction">
    <interactant intactId="EBI-308084">
        <id>P08151</id>
    </interactant>
    <interactant intactId="EBI-1383852">
        <id>P54646</id>
        <label>PRKAA2</label>
    </interactant>
    <organismsDiffer>false</organismsDiffer>
    <experiments>3</experiments>
</comment>
<comment type="interaction">
    <interactant intactId="EBI-308084">
        <id>P08151</id>
    </interactant>
    <interactant intactId="EBI-1775921">
        <id>P23443</id>
        <label>RPS6KB1</label>
    </interactant>
    <organismsDiffer>false</organismsDiffer>
    <experiments>4</experiments>
</comment>
<comment type="interaction">
    <interactant intactId="EBI-308084">
        <id>P08151</id>
    </interactant>
    <interactant intactId="EBI-6093204">
        <id>P23443-2</id>
        <label>RPS6KB1</label>
    </interactant>
    <organismsDiffer>false</organismsDiffer>
    <experiments>2</experiments>
</comment>
<comment type="interaction">
    <interactant intactId="EBI-308084">
        <id>P08151</id>
    </interactant>
    <interactant intactId="EBI-740595">
        <id>Q9UMX1</id>
        <label>SUFU</label>
    </interactant>
    <organismsDiffer>false</organismsDiffer>
    <experiments>27</experiments>
</comment>
<comment type="interaction">
    <interactant intactId="EBI-308084">
        <id>P08151</id>
    </interactant>
    <interactant intactId="EBI-740615">
        <id>Q9UMX1-1</id>
        <label>SUFU</label>
    </interactant>
    <organismsDiffer>false</organismsDiffer>
    <experiments>2</experiments>
</comment>
<comment type="interaction">
    <interactant intactId="EBI-308084">
        <id>P08151</id>
    </interactant>
    <interactant intactId="EBI-740621">
        <id>Q9UMX1-2</id>
        <label>SUFU</label>
    </interactant>
    <organismsDiffer>false</organismsDiffer>
    <experiments>4</experiments>
</comment>
<comment type="interaction">
    <interactant intactId="EBI-308084">
        <id>P08151</id>
    </interactant>
    <interactant intactId="EBI-5235829">
        <id>Q8IWZ5</id>
        <label>TRIM42</label>
    </interactant>
    <organismsDiffer>false</organismsDiffer>
    <experiments>3</experiments>
</comment>
<comment type="interaction">
    <interactant intactId="EBI-308084">
        <id>P08151</id>
    </interactant>
    <interactant intactId="EBI-3504450">
        <id>P40337-1</id>
        <label>VHL</label>
    </interactant>
    <organismsDiffer>false</organismsDiffer>
    <experiments>2</experiments>
</comment>
<comment type="interaction">
    <interactant intactId="EBI-308084">
        <id>P08151</id>
    </interactant>
    <interactant intactId="EBI-301270">
        <id>P40337-3</id>
        <label>VHL</label>
    </interactant>
    <organismsDiffer>false</organismsDiffer>
    <experiments>2</experiments>
</comment>
<comment type="interaction">
    <interactant intactId="EBI-308084">
        <id>P08151</id>
    </interactant>
    <interactant intactId="EBI-3896014">
        <id>Q9QZS3-2</id>
        <label>Numb</label>
    </interactant>
    <organismsDiffer>true</organismsDiffer>
    <experiments>4</experiments>
</comment>
<comment type="interaction">
    <interactant intactId="EBI-308084">
        <id>P08151</id>
    </interactant>
    <interactant intactId="EBI-308006">
        <id>P46684</id>
        <label>Zic1</label>
    </interactant>
    <organismsDiffer>true</organismsDiffer>
    <experiments>2</experiments>
</comment>
<comment type="interaction">
    <interactant intactId="EBI-16038799">
        <id>P08151-1</id>
    </interactant>
    <interactant intactId="EBI-286199">
        <id>P41743</id>
        <label>PRKCI</label>
    </interactant>
    <organismsDiffer>false</organismsDiffer>
    <experiments>3</experiments>
</comment>
<comment type="subcellular location">
    <subcellularLocation>
        <location evidence="5 9 10 13">Cytoplasm</location>
    </subcellularLocation>
    <subcellularLocation>
        <location evidence="5 7 9 10 12">Nucleus</location>
    </subcellularLocation>
    <text evidence="5 7 10">Tethered in the cytoplasm by binding to SUFU (PubMed:10806483). Activation and translocation to the nucleus is promoted by interaction with STK36 (PubMed:10806483). Phosphorylation by ULK3 may promote nuclear localization (PubMed:19878745). Translocation to the nucleus is promoted by interaction with ZIC1 (PubMed:11238441).</text>
</comment>
<comment type="subcellular location">
    <molecule>Isoform 2</molecule>
    <subcellularLocation>
        <location evidence="9">Cytoplasm</location>
    </subcellularLocation>
    <subcellularLocation>
        <location evidence="9">Nucleus</location>
    </subcellularLocation>
</comment>
<comment type="alternative products">
    <event type="alternative splicing"/>
    <isoform>
        <id>P08151-1</id>
        <name>1</name>
        <sequence type="displayed"/>
    </isoform>
    <isoform>
        <id>P08151-2</id>
        <name>2</name>
        <name>tGLI1</name>
        <sequence type="described" ref="VSP_042215"/>
    </isoform>
    <isoform>
        <id>P08151-3</id>
        <name>3</name>
        <sequence type="described" ref="VSP_054829"/>
    </isoform>
</comment>
<comment type="tissue specificity">
    <text evidence="9 10 12">Detected in testis (at protein level) (PubMed:2105456). Testis, myometrium and fallopian tube. Also expressed in the brain with highest expression in the cerebellum, optic nerve and olfactory tract (PubMed:19878745). Isoform 1 is detected in brain, spleen, pancreas, liver, kidney and placenta; isoform 2 is not detectable in these tissues (PubMed:19706761).</text>
</comment>
<comment type="induction">
    <text evidence="9">Isoform 1 and isoform 2 are amplified in glioblastoma cells.</text>
</comment>
<comment type="PTM">
    <text evidence="10">Phosphorylated in vitro by ULK3.</text>
</comment>
<comment type="PTM">
    <text evidence="11">Acetylation at Lys-518 down-regulates transcriptional activity. Deacetylated by HDAC1.</text>
</comment>
<comment type="PTM">
    <text evidence="13">Ubiquitinated by the CRL2(FEM1B) complex, suppressing GLI1 transcriptional activator activity.</text>
</comment>
<comment type="disease" evidence="17">
    <disease id="DI-05336">
        <name>Polydactyly, postaxial, A8</name>
        <acronym>PAPA8</acronym>
        <description>A form of postaxial polydactyly, a condition characterized by the occurrence of supernumerary digits in the upper and/or lower extremities. In postaxial polydactyly type A, the extra digit is well-formed and articulates with the fifth or a sixth metacarpal/metatarsal. PAPA8 is an autosomal recessive condition characterized by the presence of postaxial extra digits (hexadactyly) on the hands and/or the feet.</description>
        <dbReference type="MIM" id="618123"/>
    </disease>
    <text>The disease is caused by variants affecting the gene represented in this entry.</text>
</comment>
<comment type="disease" evidence="18">
    <disease id="DI-05578">
        <name>Polydactyly, preaxial 1</name>
        <acronym>PPD1</acronym>
        <description>A form of polydactyly, a condition defined by the occurrence of supernumerary digits in the upper and/or lower extremities. Preaxial or radial polydactyly refers to the presence of extra digits on the radial side of the hand. PPD1 is an autosomal recessive form characterized by duplication of the distal phalanx of the thumb.</description>
        <dbReference type="MIM" id="174400"/>
    </disease>
    <text>The disease may be caused by variants affecting the gene represented in this entry.</text>
</comment>
<comment type="miscellaneous">
    <molecule>Isoform 2</molecule>
    <text evidence="22">Undetectable in normal cells but highly expressed in cancer cells.</text>
</comment>
<comment type="similarity">
    <text evidence="22">Belongs to the GLI C2H2-type zinc-finger protein family.</text>
</comment>
<comment type="online information" name="Atlas of Genetics and Cytogenetics in Oncology and Haematology">
    <link uri="https://atlasgeneticsoncology.org/gene/310/GLI"/>
</comment>
<accession>P08151</accession>
<accession>D0EUY3</accession>
<accession>E9PQQ9</accession>
<accession>F5H6H8</accession>
<accession>Q8TDN9</accession>
<feature type="chain" id="PRO_0000047197" description="Zinc finger protein GLI1">
    <location>
        <begin position="1"/>
        <end position="1106"/>
    </location>
</feature>
<feature type="zinc finger region" description="C2H2-type 1" evidence="3">
    <location>
        <begin position="235"/>
        <end position="260"/>
    </location>
</feature>
<feature type="zinc finger region" description="C2H2-type 2" evidence="3">
    <location>
        <begin position="268"/>
        <end position="295"/>
    </location>
</feature>
<feature type="zinc finger region" description="C2H2-type 3" evidence="3">
    <location>
        <begin position="301"/>
        <end position="325"/>
    </location>
</feature>
<feature type="zinc finger region" description="C2H2-type 4" evidence="3">
    <location>
        <begin position="331"/>
        <end position="356"/>
    </location>
</feature>
<feature type="zinc finger region" description="C2H2-type 5" evidence="3">
    <location>
        <begin position="362"/>
        <end position="387"/>
    </location>
</feature>
<feature type="region of interest" description="SNAG domain" evidence="1">
    <location>
        <begin position="1"/>
        <end position="20"/>
    </location>
</feature>
<feature type="region of interest" description="Interaction with SUFU" evidence="14 15">
    <location>
        <begin position="120"/>
        <end position="124"/>
    </location>
</feature>
<feature type="region of interest" description="Interaction with DNA" evidence="19">
    <location>
        <begin position="283"/>
        <end position="291"/>
    </location>
</feature>
<feature type="region of interest" description="Interaction with DNA" evidence="19">
    <location>
        <begin position="345"/>
        <end position="350"/>
    </location>
</feature>
<feature type="region of interest" description="Disordered" evidence="4">
    <location>
        <begin position="375"/>
        <end position="485"/>
    </location>
</feature>
<feature type="region of interest" description="Interaction with DNA" evidence="19">
    <location>
        <begin position="375"/>
        <end position="381"/>
    </location>
</feature>
<feature type="region of interest" description="Disordered" evidence="4">
    <location>
        <begin position="516"/>
        <end position="580"/>
    </location>
</feature>
<feature type="region of interest" description="Disordered" evidence="4">
    <location>
        <begin position="732"/>
        <end position="792"/>
    </location>
</feature>
<feature type="region of interest" description="Disordered" evidence="4">
    <location>
        <begin position="817"/>
        <end position="889"/>
    </location>
</feature>
<feature type="region of interest" description="Disordered" evidence="4">
    <location>
        <begin position="914"/>
        <end position="942"/>
    </location>
</feature>
<feature type="region of interest" description="Disordered" evidence="4">
    <location>
        <begin position="1054"/>
        <end position="1087"/>
    </location>
</feature>
<feature type="compositionally biased region" description="Basic and acidic residues" evidence="4">
    <location>
        <begin position="413"/>
        <end position="428"/>
    </location>
</feature>
<feature type="compositionally biased region" description="Polar residues" evidence="4">
    <location>
        <begin position="442"/>
        <end position="463"/>
    </location>
</feature>
<feature type="compositionally biased region" description="Low complexity" evidence="4">
    <location>
        <begin position="544"/>
        <end position="560"/>
    </location>
</feature>
<feature type="compositionally biased region" description="Low complexity" evidence="4">
    <location>
        <begin position="737"/>
        <end position="753"/>
    </location>
</feature>
<feature type="compositionally biased region" description="Pro residues" evidence="4">
    <location>
        <begin position="754"/>
        <end position="766"/>
    </location>
</feature>
<feature type="compositionally biased region" description="Polar residues" evidence="4">
    <location>
        <begin position="768"/>
        <end position="779"/>
    </location>
</feature>
<feature type="modified residue" description="N6-acetyllysine" evidence="11">
    <location>
        <position position="518"/>
    </location>
</feature>
<feature type="cross-link" description="Glycyl lysine isopeptide (Lys-Gly) (interchain with G-Cter in SUMO2)" evidence="23">
    <location>
        <position position="1003"/>
    </location>
</feature>
<feature type="splice variant" id="VSP_054829" description="In isoform 3." evidence="22">
    <location>
        <begin position="1"/>
        <end position="128"/>
    </location>
</feature>
<feature type="splice variant" id="VSP_042215" description="In isoform 2." evidence="21">
    <location>
        <begin position="34"/>
        <end position="74"/>
    </location>
</feature>
<feature type="sequence variant" id="VAR_081480" description="In PAPA8." evidence="17">
    <location>
        <begin position="113"/>
        <end position="1106"/>
    </location>
</feature>
<feature type="sequence variant" id="VAR_035557" description="In a breast cancer sample; somatic mutation." evidence="8">
    <original>P</original>
    <variation>A</variation>
    <location>
        <position position="210"/>
    </location>
</feature>
<feature type="sequence variant" id="VAR_082590" description="In PPD1; uncertain significance; dbSNP:rs753690500." evidence="18">
    <original>L</original>
    <variation>Q</variation>
    <location>
        <position position="506"/>
    </location>
</feature>
<feature type="sequence variant" id="VAR_035558" description="In a breast cancer sample; somatic mutation." evidence="8">
    <original>T</original>
    <variation>I</variation>
    <location>
        <position position="514"/>
    </location>
</feature>
<feature type="sequence variant" id="VAR_081481" description="In PAPA8." evidence="17">
    <location>
        <begin position="644"/>
        <end position="1106"/>
    </location>
</feature>
<feature type="sequence variant" id="VAR_081482" description="In PAPA8; decreased transcriptional activity; reduced expression of the GLI1 target PTCH1 observed in patient fibroblasts after chemical induction of the hedgehog pathway." evidence="17">
    <location>
        <begin position="780"/>
        <end position="1106"/>
    </location>
</feature>
<feature type="sequence variant" id="VAR_035559" description="In a breast cancer sample; somatic mutation." evidence="8">
    <original>E</original>
    <variation>Q</variation>
    <location>
        <position position="817"/>
    </location>
</feature>
<feature type="sequence variant" id="VAR_015114" evidence="6">
    <original>D</original>
    <variation>A</variation>
    <location>
        <position position="884"/>
    </location>
</feature>
<feature type="sequence variant" id="VAR_015115" description="In dbSNP:rs2228224." evidence="6 20">
    <original>G</original>
    <variation>D</variation>
    <location>
        <position position="933"/>
    </location>
</feature>
<feature type="sequence variant" id="VAR_052723" description="In dbSNP:rs2229300.">
    <original>G</original>
    <variation>V</variation>
    <location>
        <position position="1012"/>
    </location>
</feature>
<feature type="sequence variant" id="VAR_015116" description="In dbSNP:rs2228226." evidence="6 20">
    <original>E</original>
    <variation>Q</variation>
    <location>
        <position position="1100"/>
    </location>
</feature>
<feature type="sequence conflict" description="In Ref. 3; ACX35434." evidence="22" ref="3">
    <original>A</original>
    <variation>AS</variation>
    <location>
        <position position="1106"/>
    </location>
</feature>
<feature type="strand" evidence="25">
    <location>
        <begin position="120"/>
        <end position="123"/>
    </location>
</feature>
<feature type="helix" evidence="26">
    <location>
        <begin position="249"/>
        <end position="259"/>
    </location>
</feature>
<feature type="strand" evidence="24">
    <location>
        <begin position="261"/>
        <end position="263"/>
    </location>
</feature>
<feature type="turn" evidence="26">
    <location>
        <begin position="276"/>
        <end position="279"/>
    </location>
</feature>
<feature type="strand" evidence="26">
    <location>
        <begin position="282"/>
        <end position="284"/>
    </location>
</feature>
<feature type="helix" evidence="26">
    <location>
        <begin position="285"/>
        <end position="296"/>
    </location>
</feature>
<feature type="helix" evidence="24">
    <location>
        <begin position="315"/>
        <end position="324"/>
    </location>
</feature>
<feature type="strand" evidence="24">
    <location>
        <begin position="341"/>
        <end position="346"/>
    </location>
</feature>
<feature type="helix" evidence="24">
    <location>
        <begin position="349"/>
        <end position="354"/>
    </location>
</feature>
<feature type="turn" evidence="24">
    <location>
        <begin position="367"/>
        <end position="369"/>
    </location>
</feature>
<feature type="strand" evidence="24">
    <location>
        <begin position="372"/>
        <end position="375"/>
    </location>
</feature>
<feature type="helix" evidence="24">
    <location>
        <begin position="376"/>
        <end position="381"/>
    </location>
</feature>
<feature type="turn" evidence="24">
    <location>
        <begin position="382"/>
        <end position="384"/>
    </location>
</feature>
<reference key="1">
    <citation type="journal article" date="1988" name="Nature">
        <title>The GLI gene is a member of the Kruppel family of zinc finger proteins.</title>
        <authorList>
            <person name="Kinzler K.W."/>
            <person name="Ruppert J.M."/>
            <person name="Bigner S.H."/>
            <person name="Vogelstein B."/>
        </authorList>
    </citation>
    <scope>NUCLEOTIDE SEQUENCE [MRNA] (ISOFORM 1)</scope>
</reference>
<reference key="2">
    <citation type="submission" date="2000-10" db="EMBL/GenBank/DDBJ databases">
        <title>Polymorphic variants of the human oncogene GLI1 function similarly.</title>
        <authorList>
            <person name="Yoon J.W."/>
            <person name="Kent P."/>
            <person name="Clark A."/>
            <person name="Patterson J."/>
            <person name="Villavicencio E."/>
            <person name="Iannaccone P."/>
            <person name="Walterhouse D."/>
        </authorList>
    </citation>
    <scope>NUCLEOTIDE SEQUENCE [GENOMIC DNA]</scope>
    <scope>VARIANTS ASP-933 AND GLN-1100</scope>
</reference>
<reference key="3">
    <citation type="journal article" date="2009" name="Cancer Res.">
        <title>A novel splice variant of GLI1 that promotes glioblastoma cell migration and invasion.</title>
        <authorList>
            <person name="Lo H.W."/>
            <person name="Zhu H."/>
            <person name="Cao X."/>
            <person name="Aldrich A."/>
            <person name="Ali-Osman F."/>
        </authorList>
    </citation>
    <scope>NUCLEOTIDE SEQUENCE [MRNA] (ISOFORM 2)</scope>
    <scope>ALTERNATIVE SPLICING</scope>
    <scope>FUNCTION</scope>
    <scope>SUBCELLULAR LOCATION</scope>
    <scope>INDUCTION</scope>
    <scope>TISSUE SPECIFICITY</scope>
</reference>
<reference key="4">
    <citation type="journal article" date="2006" name="Nature">
        <title>The finished DNA sequence of human chromosome 12.</title>
        <authorList>
            <person name="Scherer S.E."/>
            <person name="Muzny D.M."/>
            <person name="Buhay C.J."/>
            <person name="Chen R."/>
            <person name="Cree A."/>
            <person name="Ding Y."/>
            <person name="Dugan-Rocha S."/>
            <person name="Gill R."/>
            <person name="Gunaratne P."/>
            <person name="Harris R.A."/>
            <person name="Hawes A.C."/>
            <person name="Hernandez J."/>
            <person name="Hodgson A.V."/>
            <person name="Hume J."/>
            <person name="Jackson A."/>
            <person name="Khan Z.M."/>
            <person name="Kovar-Smith C."/>
            <person name="Lewis L.R."/>
            <person name="Lozado R.J."/>
            <person name="Metzker M.L."/>
            <person name="Milosavljevic A."/>
            <person name="Miner G.R."/>
            <person name="Montgomery K.T."/>
            <person name="Morgan M.B."/>
            <person name="Nazareth L.V."/>
            <person name="Scott G."/>
            <person name="Sodergren E."/>
            <person name="Song X.-Z."/>
            <person name="Steffen D."/>
            <person name="Lovering R.C."/>
            <person name="Wheeler D.A."/>
            <person name="Worley K.C."/>
            <person name="Yuan Y."/>
            <person name="Zhang Z."/>
            <person name="Adams C.Q."/>
            <person name="Ansari-Lari M.A."/>
            <person name="Ayele M."/>
            <person name="Brown M.J."/>
            <person name="Chen G."/>
            <person name="Chen Z."/>
            <person name="Clerc-Blankenburg K.P."/>
            <person name="Davis C."/>
            <person name="Delgado O."/>
            <person name="Dinh H.H."/>
            <person name="Draper H."/>
            <person name="Gonzalez-Garay M.L."/>
            <person name="Havlak P."/>
            <person name="Jackson L.R."/>
            <person name="Jacob L.S."/>
            <person name="Kelly S.H."/>
            <person name="Li L."/>
            <person name="Li Z."/>
            <person name="Liu J."/>
            <person name="Liu W."/>
            <person name="Lu J."/>
            <person name="Maheshwari M."/>
            <person name="Nguyen B.-V."/>
            <person name="Okwuonu G.O."/>
            <person name="Pasternak S."/>
            <person name="Perez L.M."/>
            <person name="Plopper F.J.H."/>
            <person name="Santibanez J."/>
            <person name="Shen H."/>
            <person name="Tabor P.E."/>
            <person name="Verduzco D."/>
            <person name="Waldron L."/>
            <person name="Wang Q."/>
            <person name="Williams G.A."/>
            <person name="Zhang J."/>
            <person name="Zhou J."/>
            <person name="Allen C.C."/>
            <person name="Amin A.G."/>
            <person name="Anyalebechi V."/>
            <person name="Bailey M."/>
            <person name="Barbaria J.A."/>
            <person name="Bimage K.E."/>
            <person name="Bryant N.P."/>
            <person name="Burch P.E."/>
            <person name="Burkett C.E."/>
            <person name="Burrell K.L."/>
            <person name="Calderon E."/>
            <person name="Cardenas V."/>
            <person name="Carter K."/>
            <person name="Casias K."/>
            <person name="Cavazos I."/>
            <person name="Cavazos S.R."/>
            <person name="Ceasar H."/>
            <person name="Chacko J."/>
            <person name="Chan S.N."/>
            <person name="Chavez D."/>
            <person name="Christopoulos C."/>
            <person name="Chu J."/>
            <person name="Cockrell R."/>
            <person name="Cox C.D."/>
            <person name="Dang M."/>
            <person name="Dathorne S.R."/>
            <person name="David R."/>
            <person name="Davis C.M."/>
            <person name="Davy-Carroll L."/>
            <person name="Deshazo D.R."/>
            <person name="Donlin J.E."/>
            <person name="D'Souza L."/>
            <person name="Eaves K.A."/>
            <person name="Egan A."/>
            <person name="Emery-Cohen A.J."/>
            <person name="Escotto M."/>
            <person name="Flagg N."/>
            <person name="Forbes L.D."/>
            <person name="Gabisi A.M."/>
            <person name="Garza M."/>
            <person name="Hamilton C."/>
            <person name="Henderson N."/>
            <person name="Hernandez O."/>
            <person name="Hines S."/>
            <person name="Hogues M.E."/>
            <person name="Huang M."/>
            <person name="Idlebird D.G."/>
            <person name="Johnson R."/>
            <person name="Jolivet A."/>
            <person name="Jones S."/>
            <person name="Kagan R."/>
            <person name="King L.M."/>
            <person name="Leal B."/>
            <person name="Lebow H."/>
            <person name="Lee S."/>
            <person name="LeVan J.M."/>
            <person name="Lewis L.C."/>
            <person name="London P."/>
            <person name="Lorensuhewa L.M."/>
            <person name="Loulseged H."/>
            <person name="Lovett D.A."/>
            <person name="Lucier A."/>
            <person name="Lucier R.L."/>
            <person name="Ma J."/>
            <person name="Madu R.C."/>
            <person name="Mapua P."/>
            <person name="Martindale A.D."/>
            <person name="Martinez E."/>
            <person name="Massey E."/>
            <person name="Mawhiney S."/>
            <person name="Meador M.G."/>
            <person name="Mendez S."/>
            <person name="Mercado C."/>
            <person name="Mercado I.C."/>
            <person name="Merritt C.E."/>
            <person name="Miner Z.L."/>
            <person name="Minja E."/>
            <person name="Mitchell T."/>
            <person name="Mohabbat F."/>
            <person name="Mohabbat K."/>
            <person name="Montgomery B."/>
            <person name="Moore N."/>
            <person name="Morris S."/>
            <person name="Munidasa M."/>
            <person name="Ngo R.N."/>
            <person name="Nguyen N.B."/>
            <person name="Nickerson E."/>
            <person name="Nwaokelemeh O.O."/>
            <person name="Nwokenkwo S."/>
            <person name="Obregon M."/>
            <person name="Oguh M."/>
            <person name="Oragunye N."/>
            <person name="Oviedo R.J."/>
            <person name="Parish B.J."/>
            <person name="Parker D.N."/>
            <person name="Parrish J."/>
            <person name="Parks K.L."/>
            <person name="Paul H.A."/>
            <person name="Payton B.A."/>
            <person name="Perez A."/>
            <person name="Perrin W."/>
            <person name="Pickens A."/>
            <person name="Primus E.L."/>
            <person name="Pu L.-L."/>
            <person name="Puazo M."/>
            <person name="Quiles M.M."/>
            <person name="Quiroz J.B."/>
            <person name="Rabata D."/>
            <person name="Reeves K."/>
            <person name="Ruiz S.J."/>
            <person name="Shao H."/>
            <person name="Sisson I."/>
            <person name="Sonaike T."/>
            <person name="Sorelle R.P."/>
            <person name="Sutton A.E."/>
            <person name="Svatek A.F."/>
            <person name="Svetz L.A."/>
            <person name="Tamerisa K.S."/>
            <person name="Taylor T.R."/>
            <person name="Teague B."/>
            <person name="Thomas N."/>
            <person name="Thorn R.D."/>
            <person name="Trejos Z.Y."/>
            <person name="Trevino B.K."/>
            <person name="Ukegbu O.N."/>
            <person name="Urban J.B."/>
            <person name="Vasquez L.I."/>
            <person name="Vera V.A."/>
            <person name="Villasana D.M."/>
            <person name="Wang L."/>
            <person name="Ward-Moore S."/>
            <person name="Warren J.T."/>
            <person name="Wei X."/>
            <person name="White F."/>
            <person name="Williamson A.L."/>
            <person name="Wleczyk R."/>
            <person name="Wooden H.S."/>
            <person name="Wooden S.H."/>
            <person name="Yen J."/>
            <person name="Yoon L."/>
            <person name="Yoon V."/>
            <person name="Zorrilla S.E."/>
            <person name="Nelson D."/>
            <person name="Kucherlapati R."/>
            <person name="Weinstock G."/>
            <person name="Gibbs R.A."/>
        </authorList>
    </citation>
    <scope>NUCLEOTIDE SEQUENCE [LARGE SCALE GENOMIC DNA]</scope>
</reference>
<reference key="5">
    <citation type="journal article" date="2004" name="Genome Res.">
        <title>The status, quality, and expansion of the NIH full-length cDNA project: the Mammalian Gene Collection (MGC).</title>
        <authorList>
            <consortium name="The MGC Project Team"/>
        </authorList>
    </citation>
    <scope>NUCLEOTIDE SEQUENCE [LARGE SCALE MRNA] (ISOFORM 1)</scope>
    <source>
        <tissue>Muscle</tissue>
    </source>
</reference>
<reference key="6">
    <citation type="journal article" date="1990" name="Mol. Cell. Biol.">
        <title>The GLI gene encodes a nuclear protein which binds specific sequences in the human genome.</title>
        <authorList>
            <person name="Kinzler K.W."/>
            <person name="Vogelstein B."/>
        </authorList>
    </citation>
    <scope>FUNCTION</scope>
    <scope>SUBCELLULAR LOCATION</scope>
    <scope>DNA-BINDING</scope>
</reference>
<reference key="7">
    <citation type="journal article" date="2000" name="Nat. Cell Biol.">
        <title>Gli regulation by the opposing activities of fused and suppressor of fused.</title>
        <authorList>
            <person name="Murone M."/>
            <person name="Luoh S.-L."/>
            <person name="Stone D."/>
            <person name="Li W."/>
            <person name="Gurney A."/>
            <person name="Armanini M."/>
            <person name="Grey C."/>
            <person name="Rosenthal A."/>
            <person name="de Sauvage F.J."/>
        </authorList>
    </citation>
    <scope>FUNCTION</scope>
    <scope>SUBCELLULAR LOCATION</scope>
    <scope>INTERACTION WITH STK36 AND SUFU</scope>
</reference>
<reference key="8">
    <citation type="journal article" date="2001" name="J. Biol. Chem.">
        <title>Physical and functional interactions between Zic and Gli proteins.</title>
        <authorList>
            <person name="Koyabu Y."/>
            <person name="Nakata K."/>
            <person name="Mizugishi K."/>
            <person name="Aruga J."/>
            <person name="Mikoshiba K."/>
        </authorList>
    </citation>
    <scope>FUNCTION</scope>
    <scope>INTERACTION WITH ZIC1</scope>
    <scope>SUBCELLULAR LOCATION</scope>
</reference>
<reference key="9">
    <citation type="journal article" date="2010" name="Exp. Cell Res.">
        <title>Identification of a novel serine/threonine kinase ULK3 as a positive regulator of Hedgehog pathway.</title>
        <authorList>
            <person name="Maloverjan A."/>
            <person name="Piirsoo M."/>
            <person name="Michelson P."/>
            <person name="Kogerman P."/>
            <person name="Osterlund T."/>
        </authorList>
    </citation>
    <scope>SUBCELLULAR LOCATION</scope>
    <scope>TISSUE SPECIFICITY</scope>
    <scope>PHOSPHORYLATION</scope>
    <scope>FUNCTION</scope>
</reference>
<reference key="10">
    <citation type="journal article" date="2010" name="Nat. Cell Biol.">
        <title>Histone deacetylase and Cullin3-REN(KCTD11) ubiquitin ligase interplay regulates Hedgehog signalling through Gli acetylation.</title>
        <authorList>
            <person name="Canettieri G."/>
            <person name="Di Marcotullio L."/>
            <person name="Greco A."/>
            <person name="Coni S."/>
            <person name="Antonucci L."/>
            <person name="Infante P."/>
            <person name="Pietrosanti L."/>
            <person name="De Smaele E."/>
            <person name="Ferretti E."/>
            <person name="Miele E."/>
            <person name="Pelloni M."/>
            <person name="De Simone G."/>
            <person name="Pedone E.M."/>
            <person name="Gallinari P."/>
            <person name="Giorgi A."/>
            <person name="Steinkuhler C."/>
            <person name="Vitagliano L."/>
            <person name="Pedone C."/>
            <person name="Schinin M.E."/>
            <person name="Screpanti I."/>
            <person name="Gulino A."/>
        </authorList>
    </citation>
    <scope>ACETYLATION AT LYS-518</scope>
</reference>
<reference key="11">
    <citation type="journal article" date="2013" name="Biochem. Biophys. Res. Commun.">
        <title>Fem1b promotes ubiquitylation and suppresses transcriptional activity of Gli1.</title>
        <authorList>
            <person name="Gilder A.S."/>
            <person name="Chen Y.B."/>
            <person name="Jackson R.J. III"/>
            <person name="Jiang J."/>
            <person name="Maher J.F."/>
        </authorList>
    </citation>
    <scope>FUNCTION</scope>
    <scope>SUBCELLULAR LOCATION</scope>
    <scope>UBIQUITINATION</scope>
</reference>
<reference key="12">
    <citation type="journal article" date="2017" name="Am. J. Hum. Genet.">
        <title>Hypomorphic Recessive Variants in SUFU Impair the Sonic Hedgehog Pathway and Cause Joubert Syndrome with Cranio-facial and Skeletal Defects.</title>
        <authorList>
            <person name="De Mori R."/>
            <person name="Romani M."/>
            <person name="D'Arrigo S."/>
            <person name="Zaki M.S."/>
            <person name="Lorefice E."/>
            <person name="Tardivo S."/>
            <person name="Biagini T."/>
            <person name="Stanley V."/>
            <person name="Musaev D."/>
            <person name="Fluss J."/>
            <person name="Micalizzi A."/>
            <person name="Nuovo S."/>
            <person name="Illi B."/>
            <person name="Chiapparini L."/>
            <person name="Di Marcotullio L."/>
            <person name="Issa M.Y."/>
            <person name="Anello D."/>
            <person name="Casella A."/>
            <person name="Ginevrino M."/>
            <person name="Leggins A.S."/>
            <person name="Roosing S."/>
            <person name="Alfonsi R."/>
            <person name="Rosati J."/>
            <person name="Schot R."/>
            <person name="Mancini G.M.S."/>
            <person name="Bertini E."/>
            <person name="Dobyns W.B."/>
            <person name="Mazza T."/>
            <person name="Gleeson J.G."/>
            <person name="Valente E.M."/>
        </authorList>
    </citation>
    <scope>INTERACTION WITH SUFU</scope>
</reference>
<reference key="13">
    <citation type="journal article" date="2017" name="Hum. Mol. Genet.">
        <title>GLI1 inactivation is associated with developmental phenotypes overlapping with Ellis-van Creveld syndrome.</title>
        <authorList>
            <person name="Palencia-Campos A."/>
            <person name="Ullah A."/>
            <person name="Nevado J."/>
            <person name="Yildirim R."/>
            <person name="Unal E."/>
            <person name="Ciorraga M."/>
            <person name="Barruz P."/>
            <person name="Chico L."/>
            <person name="Piceci-Sparascio F."/>
            <person name="Guida V."/>
            <person name="De Luca A."/>
            <person name="Kayserili H."/>
            <person name="Ullah I."/>
            <person name="Burmeister M."/>
            <person name="Lapunzina P."/>
            <person name="Ahmad W."/>
            <person name="Morales A.V."/>
            <person name="Ruiz-Perez V.L."/>
        </authorList>
    </citation>
    <scope>FUNCTION</scope>
    <scope>INVOLVEMENT IN PAPA8</scope>
    <scope>VARIANTS PAPA8 113-ARG--ALA-1106 DEL; 644-GLN--ALA-1106 DEL AND 780-TRP--ALA-1106 DEL</scope>
    <scope>CHARACTERIZATION OF VARIANT 780-TRP--ALA-1106 DEL</scope>
</reference>
<reference key="14">
    <citation type="journal article" date="2017" name="Nat. Struct. Mol. Biol.">
        <title>Site-specific mapping of the human SUMO proteome reveals co-modification with phosphorylation.</title>
        <authorList>
            <person name="Hendriks I.A."/>
            <person name="Lyon D."/>
            <person name="Young C."/>
            <person name="Jensen L.J."/>
            <person name="Vertegaal A.C."/>
            <person name="Nielsen M.L."/>
        </authorList>
    </citation>
    <scope>SUMOYLATION [LARGE SCALE ANALYSIS] AT LYS-1003</scope>
    <scope>IDENTIFICATION BY MASS SPECTROMETRY [LARGE SCALE ANALYSIS]</scope>
</reference>
<reference key="15">
    <citation type="journal article" date="1993" name="Science">
        <title>Crystal structure of a five-finger GLI-DNA complex: new perspectives on zinc fingers.</title>
        <authorList>
            <person name="Pavletich N.P."/>
            <person name="Pabo C.O."/>
        </authorList>
    </citation>
    <scope>X-RAY CRYSTALLOGRAPHY (2.6 ANGSTROMS) OF 234-388 IN COMPLEX WITH DNA</scope>
    <scope>DNA-BINDING</scope>
</reference>
<reference key="16">
    <citation type="journal article" date="2013" name="Acta Crystallogr. D">
        <title>Structural basis of SUFU-GLI interaction in human Hedgehog signalling regulation.</title>
        <authorList>
            <person name="Cherry A.L."/>
            <person name="Finta C."/>
            <person name="Karlstrom M."/>
            <person name="Jin Q."/>
            <person name="Schwend T."/>
            <person name="Astorga-Wells J."/>
            <person name="Zubarev R.A."/>
            <person name="Del Campo M."/>
            <person name="Criswell A.R."/>
            <person name="de Sanctis D."/>
            <person name="Jovine L."/>
            <person name="Toftgard R."/>
        </authorList>
    </citation>
    <scope>X-RAY CRYSTALLOGRAPHY (2.80 ANGSTROMS) OF 115-131 IN COMPLEX WITH SUFU</scope>
    <scope>INTERACTION WITH SUFU</scope>
    <scope>FUNCTION</scope>
</reference>
<reference key="17">
    <citation type="journal article" date="2013" name="Nat. Commun.">
        <title>Structural insight into the mutual recognition and regulation between Suppressor of Fused and Gli/Ci.</title>
        <authorList>
            <person name="Zhang Y."/>
            <person name="Fu L."/>
            <person name="Qi X."/>
            <person name="Zhang Z."/>
            <person name="Xia Y."/>
            <person name="Jia J."/>
            <person name="Jiang J."/>
            <person name="Zhao Y."/>
            <person name="Wu G."/>
        </authorList>
    </citation>
    <scope>X-RAY CRYSTALLOGRAPHY (1.70 ANGSTROMS) OF 112-128 IN COMPLEX WITH SUFU</scope>
    <scope>INTERACTION WITH SUFU</scope>
    <scope>FUNCTION</scope>
</reference>
<reference key="18">
    <citation type="journal article" date="2000" name="J. Invest. Dermatol.">
        <title>Identification of polymorphic variants of the GLI1 oncogene.</title>
        <authorList>
            <person name="Wang X.Q."/>
            <person name="Chan N."/>
            <person name="Rothnagel J.A."/>
        </authorList>
    </citation>
    <scope>VARIANTS ALA-884; ASP-933 AND GLN-1100</scope>
</reference>
<reference key="19">
    <citation type="journal article" date="2006" name="Science">
        <title>The consensus coding sequences of human breast and colorectal cancers.</title>
        <authorList>
            <person name="Sjoeblom T."/>
            <person name="Jones S."/>
            <person name="Wood L.D."/>
            <person name="Parsons D.W."/>
            <person name="Lin J."/>
            <person name="Barber T.D."/>
            <person name="Mandelker D."/>
            <person name="Leary R.J."/>
            <person name="Ptak J."/>
            <person name="Silliman N."/>
            <person name="Szabo S."/>
            <person name="Buckhaults P."/>
            <person name="Farrell C."/>
            <person name="Meeh P."/>
            <person name="Markowitz S.D."/>
            <person name="Willis J."/>
            <person name="Dawson D."/>
            <person name="Willson J.K.V."/>
            <person name="Gazdar A.F."/>
            <person name="Hartigan J."/>
            <person name="Wu L."/>
            <person name="Liu C."/>
            <person name="Parmigiani G."/>
            <person name="Park B.H."/>
            <person name="Bachman K.E."/>
            <person name="Papadopoulos N."/>
            <person name="Vogelstein B."/>
            <person name="Kinzler K.W."/>
            <person name="Velculescu V.E."/>
        </authorList>
    </citation>
    <scope>VARIANTS [LARGE SCALE ANALYSIS] ALA-210; ILE-514 AND GLN-817</scope>
</reference>
<reference key="20">
    <citation type="journal article" date="2019" name="Clin. Genet.">
        <title>A novel homozygous sequence variant in GLI1 underlies first case of autosomal recessive pre-axial polydactyly.</title>
        <authorList>
            <person name="Ullah A."/>
            <person name="Umair M."/>
            <person name="Majeed A.I."/>
            <person name="Abdullah Jan A."/>
            <person name="Ahmad W."/>
        </authorList>
    </citation>
    <scope>VARIANT PPD1 GLN-506</scope>
    <scope>INVOLVEMENT IN PPD1</scope>
</reference>
<sequence length="1106" mass="117904">MFNSMTPPPISSYGEPCCLRPLPSQGAPSVGTEGLSGPPFCHQANLMSGPHSYGPARETNSCTEGPLFSSPRSAVKLTKKRALSISPLSDASLDLQTVIRTSPSSLVAFINSRCTSPGGSYGHLSIGTMSPSLGFPAQMNHQKGPSPSFGVQPCGPHDSARGGMIPHPQSRGPFPTCQLKSELDMLVGKCREEPLEGDMSSPNSTGIQDPLLGMLDGREDLEREEKREPESVYETDCRWDGCSQEFDSQEQLVHHINSEHIHGERKEFVCHWGGCSRELRPFKAQYMLVVHMRRHTGEKPHKCTFEGCRKSYSRLENLKTHLRSHTGEKPYMCEHEGCSKAFSNASDRAKHQNRTHSNEKPYVCKLPGCTKRYTDPSSLRKHVKTVHGPDAHVTKRHRGDGPLPRAPSISTVEPKREREGGPIREESRLTVPEGAMKPQPSPGAQSSCSSDHSPAGSAANTDSGVEMTGNAGGSTEDLSSLDEGPCIAGTGLSTLRRLENLRLDQLHQLRPIGTRGLKLPSLSHTGTTVSRRVGPPVSLERRSSSSSSISSAYTVSRRSSLASPFPPGSPPENGASSLPGLMPAQHYLLRARYASARGGGTSPTAASSLDRIGGLPMPPWRSRAEYPGYNPNAGVTRRASDPAQAADRPAPARVQRFKSLGCVHTPPTVAGGGQNFDPYLPTSVYSPQPPSITENAAMDARGLQEEPEVGTSMVGSGLNPYMDFPPTDTLGYGGPEGAAAEPYGARGPGSLPLGPGPPTNYGPNPCPQQASYPDPTQETWGEFPSHSGLYPGPKALGGTYSQCPRLEHYGQVQVKPEQGCPVGSDSTGLAPCLNAHPSEGPPHPQPLFSHYPQPSPPQYLQSGPYTQPPPDYLPSEPRPCLDFDSPTHSTGQLKAQLVCNYVQSQQELLWEGGGREDAPAQEPSYQSPKFLGGSQVSPSRAKAPVNTYGPGFGPNLPNHKSGSYPTPSPCHENFVVGANRASHRAAAPPRLLPPLPTCYGPLKVGGTNPSCGHPEVGRLGGGPALYPPPEGQVCNPLDSLDLDNTQLDFVAILDEPQGLSPPPSHDQRGSSGHTPPPSGPPNMAVGNMSVLLRSLPGETEFLNSSA</sequence>
<dbReference type="EMBL" id="X07384">
    <property type="protein sequence ID" value="CAA30297.1"/>
    <property type="molecule type" value="mRNA"/>
</dbReference>
<dbReference type="EMBL" id="AF316573">
    <property type="protein sequence ID" value="AAM13391.1"/>
    <property type="molecule type" value="Genomic_DNA"/>
</dbReference>
<dbReference type="EMBL" id="GQ890670">
    <property type="protein sequence ID" value="ACX35434.1"/>
    <property type="molecule type" value="mRNA"/>
</dbReference>
<dbReference type="EMBL" id="AC022506">
    <property type="status" value="NOT_ANNOTATED_CDS"/>
    <property type="molecule type" value="Genomic_DNA"/>
</dbReference>
<dbReference type="EMBL" id="BC013000">
    <property type="protein sequence ID" value="AAH13000.1"/>
    <property type="molecule type" value="mRNA"/>
</dbReference>
<dbReference type="CCDS" id="CCDS53806.1">
    <molecule id="P08151-2"/>
</dbReference>
<dbReference type="CCDS" id="CCDS53807.1">
    <molecule id="P08151-3"/>
</dbReference>
<dbReference type="CCDS" id="CCDS8940.1">
    <molecule id="P08151-1"/>
</dbReference>
<dbReference type="PIR" id="S00672">
    <property type="entry name" value="TVHUGL"/>
</dbReference>
<dbReference type="RefSeq" id="NP_001153517.1">
    <molecule id="P08151-3"/>
    <property type="nucleotide sequence ID" value="NM_001160045.2"/>
</dbReference>
<dbReference type="RefSeq" id="NP_001161081.1">
    <molecule id="P08151-2"/>
    <property type="nucleotide sequence ID" value="NM_001167609.2"/>
</dbReference>
<dbReference type="RefSeq" id="NP_005260.1">
    <molecule id="P08151-1"/>
    <property type="nucleotide sequence ID" value="NM_005269.3"/>
</dbReference>
<dbReference type="RefSeq" id="XP_011536491.1">
    <molecule id="P08151-1"/>
    <property type="nucleotide sequence ID" value="XM_011538189.3"/>
</dbReference>
<dbReference type="PDB" id="2GLI">
    <property type="method" value="X-ray"/>
    <property type="resolution" value="2.60 A"/>
    <property type="chains" value="A=234-388"/>
</dbReference>
<dbReference type="PDB" id="4BLB">
    <property type="method" value="X-ray"/>
    <property type="resolution" value="2.80 A"/>
    <property type="chains" value="E/F/G/H=115-131"/>
</dbReference>
<dbReference type="PDB" id="4KMD">
    <property type="method" value="X-ray"/>
    <property type="resolution" value="1.70 A"/>
    <property type="chains" value="B=112-128"/>
</dbReference>
<dbReference type="PDB" id="5OM0">
    <property type="method" value="X-ray"/>
    <property type="resolution" value="3.20 A"/>
    <property type="chains" value="A/B=637-645"/>
</dbReference>
<dbReference type="PDB" id="7T91">
    <property type="method" value="X-ray"/>
    <property type="resolution" value="2.05 A"/>
    <property type="chains" value="A/B=234-302"/>
</dbReference>
<dbReference type="PDBsum" id="2GLI"/>
<dbReference type="PDBsum" id="4BLB"/>
<dbReference type="PDBsum" id="4KMD"/>
<dbReference type="PDBsum" id="5OM0"/>
<dbReference type="PDBsum" id="7T91"/>
<dbReference type="SMR" id="P08151"/>
<dbReference type="BioGRID" id="108997">
    <property type="interactions" value="129"/>
</dbReference>
<dbReference type="ComplexPortal" id="CPX-56">
    <property type="entry name" value="GLI1-SUFU complex"/>
</dbReference>
<dbReference type="DIP" id="DIP-32536N"/>
<dbReference type="ELM" id="P08151"/>
<dbReference type="FunCoup" id="P08151">
    <property type="interactions" value="546"/>
</dbReference>
<dbReference type="IntAct" id="P08151">
    <property type="interactions" value="45"/>
</dbReference>
<dbReference type="MINT" id="P08151"/>
<dbReference type="STRING" id="9606.ENSP00000228682"/>
<dbReference type="BindingDB" id="P08151"/>
<dbReference type="ChEMBL" id="CHEMBL5461"/>
<dbReference type="GlyGen" id="P08151">
    <property type="glycosylation" value="3 sites, 1 O-linked glycan (1 site)"/>
</dbReference>
<dbReference type="iPTMnet" id="P08151"/>
<dbReference type="PhosphoSitePlus" id="P08151"/>
<dbReference type="BioMuta" id="GLI1"/>
<dbReference type="DMDM" id="121323"/>
<dbReference type="jPOST" id="P08151"/>
<dbReference type="MassIVE" id="P08151"/>
<dbReference type="PaxDb" id="9606-ENSP00000228682"/>
<dbReference type="PeptideAtlas" id="P08151"/>
<dbReference type="ProteomicsDB" id="27194"/>
<dbReference type="ProteomicsDB" id="52074">
    <molecule id="P08151-1"/>
</dbReference>
<dbReference type="ProteomicsDB" id="52075">
    <molecule id="P08151-2"/>
</dbReference>
<dbReference type="Antibodypedia" id="4004">
    <property type="antibodies" value="899 antibodies from 46 providers"/>
</dbReference>
<dbReference type="DNASU" id="2735"/>
<dbReference type="Ensembl" id="ENST00000228682.7">
    <molecule id="P08151-1"/>
    <property type="protein sequence ID" value="ENSP00000228682.2"/>
    <property type="gene ID" value="ENSG00000111087.10"/>
</dbReference>
<dbReference type="Ensembl" id="ENST00000528467.1">
    <molecule id="P08151-2"/>
    <property type="protein sequence ID" value="ENSP00000434408.1"/>
    <property type="gene ID" value="ENSG00000111087.10"/>
</dbReference>
<dbReference type="Ensembl" id="ENST00000543426.5">
    <molecule id="P08151-3"/>
    <property type="protein sequence ID" value="ENSP00000437607.1"/>
    <property type="gene ID" value="ENSG00000111087.10"/>
</dbReference>
<dbReference type="Ensembl" id="ENST00000546141.5">
    <molecule id="P08151-2"/>
    <property type="protein sequence ID" value="ENSP00000441006.1"/>
    <property type="gene ID" value="ENSG00000111087.10"/>
</dbReference>
<dbReference type="GeneID" id="2735"/>
<dbReference type="KEGG" id="hsa:2735"/>
<dbReference type="MANE-Select" id="ENST00000228682.7">
    <property type="protein sequence ID" value="ENSP00000228682.2"/>
    <property type="RefSeq nucleotide sequence ID" value="NM_005269.3"/>
    <property type="RefSeq protein sequence ID" value="NP_005260.1"/>
</dbReference>
<dbReference type="UCSC" id="uc001snx.4">
    <molecule id="P08151-1"/>
    <property type="organism name" value="human"/>
</dbReference>
<dbReference type="AGR" id="HGNC:4317"/>
<dbReference type="CTD" id="2735"/>
<dbReference type="DisGeNET" id="2735"/>
<dbReference type="GeneCards" id="GLI1"/>
<dbReference type="GeneReviews" id="GLI1"/>
<dbReference type="HGNC" id="HGNC:4317">
    <property type="gene designation" value="GLI1"/>
</dbReference>
<dbReference type="HPA" id="ENSG00000111087">
    <property type="expression patterns" value="Tissue enhanced (cervix)"/>
</dbReference>
<dbReference type="MalaCards" id="GLI1"/>
<dbReference type="MIM" id="165220">
    <property type="type" value="gene"/>
</dbReference>
<dbReference type="MIM" id="174400">
    <property type="type" value="phenotype"/>
</dbReference>
<dbReference type="MIM" id="618123">
    <property type="type" value="phenotype"/>
</dbReference>
<dbReference type="neXtProt" id="NX_P08151"/>
<dbReference type="OpenTargets" id="ENSG00000111087"/>
<dbReference type="Orphanet" id="289">
    <property type="disease" value="Ellis Van Creveld syndrome"/>
</dbReference>
<dbReference type="Orphanet" id="93339">
    <property type="disease" value="Polydactyly of a biphalangeal thumb and/or hallux"/>
</dbReference>
<dbReference type="Orphanet" id="93334">
    <property type="disease" value="Postaxial polydactyly type A"/>
</dbReference>
<dbReference type="Orphanet" id="93335">
    <property type="disease" value="Postaxial polydactyly type B"/>
</dbReference>
<dbReference type="PharmGKB" id="PA28720"/>
<dbReference type="VEuPathDB" id="HostDB:ENSG00000111087"/>
<dbReference type="eggNOG" id="KOG1721">
    <property type="taxonomic scope" value="Eukaryota"/>
</dbReference>
<dbReference type="GeneTree" id="ENSGT00940000160235"/>
<dbReference type="HOGENOM" id="CLU_003666_0_0_1"/>
<dbReference type="InParanoid" id="P08151"/>
<dbReference type="OMA" id="ANPSCGH"/>
<dbReference type="OrthoDB" id="3214149at2759"/>
<dbReference type="PAN-GO" id="P08151">
    <property type="GO annotations" value="5 GO annotations based on evolutionary models"/>
</dbReference>
<dbReference type="PhylomeDB" id="P08151"/>
<dbReference type="TreeFam" id="TF350216"/>
<dbReference type="PathwayCommons" id="P08151"/>
<dbReference type="Reactome" id="R-HSA-5610780">
    <property type="pathway name" value="Degradation of GLI1 by the proteasome"/>
</dbReference>
<dbReference type="Reactome" id="R-HSA-5610787">
    <property type="pathway name" value="Hedgehog 'off' state"/>
</dbReference>
<dbReference type="Reactome" id="R-HSA-5632684">
    <property type="pathway name" value="Hedgehog 'on' state"/>
</dbReference>
<dbReference type="Reactome" id="R-HSA-5635851">
    <property type="pathway name" value="GLI proteins bind promoters of Hh responsive genes to promote transcription"/>
</dbReference>
<dbReference type="SignaLink" id="P08151"/>
<dbReference type="SIGNOR" id="P08151"/>
<dbReference type="BioGRID-ORCS" id="2735">
    <property type="hits" value="32 hits in 1174 CRISPR screens"/>
</dbReference>
<dbReference type="EvolutionaryTrace" id="P08151"/>
<dbReference type="GeneWiki" id="GLI1"/>
<dbReference type="GenomeRNAi" id="2735"/>
<dbReference type="Pharos" id="P08151">
    <property type="development level" value="Tchem"/>
</dbReference>
<dbReference type="PRO" id="PR:P08151"/>
<dbReference type="Proteomes" id="UP000005640">
    <property type="component" value="Chromosome 12"/>
</dbReference>
<dbReference type="RNAct" id="P08151">
    <property type="molecule type" value="protein"/>
</dbReference>
<dbReference type="Bgee" id="ENSG00000111087">
    <property type="expression patterns" value="Expressed in tibial nerve and 129 other cell types or tissues"/>
</dbReference>
<dbReference type="ExpressionAtlas" id="P08151">
    <property type="expression patterns" value="baseline and differential"/>
</dbReference>
<dbReference type="GO" id="GO:0005930">
    <property type="term" value="C:axoneme"/>
    <property type="evidence" value="ECO:0007669"/>
    <property type="project" value="Ensembl"/>
</dbReference>
<dbReference type="GO" id="GO:0036064">
    <property type="term" value="C:ciliary basal body"/>
    <property type="evidence" value="ECO:0000314"/>
    <property type="project" value="HPA"/>
</dbReference>
<dbReference type="GO" id="GO:0097546">
    <property type="term" value="C:ciliary base"/>
    <property type="evidence" value="ECO:0000304"/>
    <property type="project" value="Reactome"/>
</dbReference>
<dbReference type="GO" id="GO:0097542">
    <property type="term" value="C:ciliary tip"/>
    <property type="evidence" value="ECO:0000304"/>
    <property type="project" value="Reactome"/>
</dbReference>
<dbReference type="GO" id="GO:0005737">
    <property type="term" value="C:cytoplasm"/>
    <property type="evidence" value="ECO:0000314"/>
    <property type="project" value="UniProtKB"/>
</dbReference>
<dbReference type="GO" id="GO:0005829">
    <property type="term" value="C:cytosol"/>
    <property type="evidence" value="ECO:0000314"/>
    <property type="project" value="HPA"/>
</dbReference>
<dbReference type="GO" id="GO:1990788">
    <property type="term" value="C:GLI-SUFU complex"/>
    <property type="evidence" value="ECO:0000353"/>
    <property type="project" value="ComplexPortal"/>
</dbReference>
<dbReference type="GO" id="GO:0005654">
    <property type="term" value="C:nucleoplasm"/>
    <property type="evidence" value="ECO:0000314"/>
    <property type="project" value="HPA"/>
</dbReference>
<dbReference type="GO" id="GO:0005634">
    <property type="term" value="C:nucleus"/>
    <property type="evidence" value="ECO:0000314"/>
    <property type="project" value="UniProtKB"/>
</dbReference>
<dbReference type="GO" id="GO:0005886">
    <property type="term" value="C:plasma membrane"/>
    <property type="evidence" value="ECO:0000314"/>
    <property type="project" value="HPA"/>
</dbReference>
<dbReference type="GO" id="GO:0003682">
    <property type="term" value="F:chromatin binding"/>
    <property type="evidence" value="ECO:0000314"/>
    <property type="project" value="UniProtKB"/>
</dbReference>
<dbReference type="GO" id="GO:0003677">
    <property type="term" value="F:DNA binding"/>
    <property type="evidence" value="ECO:0000314"/>
    <property type="project" value="MGI"/>
</dbReference>
<dbReference type="GO" id="GO:0001228">
    <property type="term" value="F:DNA-binding transcription activator activity, RNA polymerase II-specific"/>
    <property type="evidence" value="ECO:0000303"/>
    <property type="project" value="BHF-UCL"/>
</dbReference>
<dbReference type="GO" id="GO:0000981">
    <property type="term" value="F:DNA-binding transcription factor activity, RNA polymerase II-specific"/>
    <property type="evidence" value="ECO:0000318"/>
    <property type="project" value="GO_Central"/>
</dbReference>
<dbReference type="GO" id="GO:0008017">
    <property type="term" value="F:microtubule binding"/>
    <property type="evidence" value="ECO:0007669"/>
    <property type="project" value="Ensembl"/>
</dbReference>
<dbReference type="GO" id="GO:0000978">
    <property type="term" value="F:RNA polymerase II cis-regulatory region sequence-specific DNA binding"/>
    <property type="evidence" value="ECO:0000318"/>
    <property type="project" value="GO_Central"/>
</dbReference>
<dbReference type="GO" id="GO:0000977">
    <property type="term" value="F:RNA polymerase II transcription regulatory region sequence-specific DNA binding"/>
    <property type="evidence" value="ECO:0000314"/>
    <property type="project" value="MGI"/>
</dbReference>
<dbReference type="GO" id="GO:0043565">
    <property type="term" value="F:sequence-specific DNA binding"/>
    <property type="evidence" value="ECO:0000314"/>
    <property type="project" value="UniProtKB"/>
</dbReference>
<dbReference type="GO" id="GO:0000976">
    <property type="term" value="F:transcription cis-regulatory region binding"/>
    <property type="evidence" value="ECO:0000314"/>
    <property type="project" value="UniProtKB"/>
</dbReference>
<dbReference type="GO" id="GO:0008270">
    <property type="term" value="F:zinc ion binding"/>
    <property type="evidence" value="ECO:0007669"/>
    <property type="project" value="UniProtKB-KW"/>
</dbReference>
<dbReference type="GO" id="GO:0021696">
    <property type="term" value="P:cerebellar cortex morphogenesis"/>
    <property type="evidence" value="ECO:0007669"/>
    <property type="project" value="Ensembl"/>
</dbReference>
<dbReference type="GO" id="GO:0048546">
    <property type="term" value="P:digestive tract morphogenesis"/>
    <property type="evidence" value="ECO:0000304"/>
    <property type="project" value="BHF-UCL"/>
</dbReference>
<dbReference type="GO" id="GO:0009953">
    <property type="term" value="P:dorsal/ventral pattern formation"/>
    <property type="evidence" value="ECO:0007669"/>
    <property type="project" value="Ensembl"/>
</dbReference>
<dbReference type="GO" id="GO:0009913">
    <property type="term" value="P:epidermal cell differentiation"/>
    <property type="evidence" value="ECO:0000314"/>
    <property type="project" value="UniProtKB"/>
</dbReference>
<dbReference type="GO" id="GO:0097421">
    <property type="term" value="P:liver regeneration"/>
    <property type="evidence" value="ECO:0007669"/>
    <property type="project" value="Ensembl"/>
</dbReference>
<dbReference type="GO" id="GO:0030324">
    <property type="term" value="P:lung development"/>
    <property type="evidence" value="ECO:0007669"/>
    <property type="project" value="Ensembl"/>
</dbReference>
<dbReference type="GO" id="GO:0090090">
    <property type="term" value="P:negative regulation of canonical Wnt signaling pathway"/>
    <property type="evidence" value="ECO:0000315"/>
    <property type="project" value="UniProtKB"/>
</dbReference>
<dbReference type="GO" id="GO:0060032">
    <property type="term" value="P:notochord regression"/>
    <property type="evidence" value="ECO:0007669"/>
    <property type="project" value="Ensembl"/>
</dbReference>
<dbReference type="GO" id="GO:0001649">
    <property type="term" value="P:osteoblast differentiation"/>
    <property type="evidence" value="ECO:0000314"/>
    <property type="project" value="UniProtKB"/>
</dbReference>
<dbReference type="GO" id="GO:0021983">
    <property type="term" value="P:pituitary gland development"/>
    <property type="evidence" value="ECO:0007669"/>
    <property type="project" value="Ensembl"/>
</dbReference>
<dbReference type="GO" id="GO:0060045">
    <property type="term" value="P:positive regulation of cardiac muscle cell proliferation"/>
    <property type="evidence" value="ECO:0000314"/>
    <property type="project" value="BHF-UCL"/>
</dbReference>
<dbReference type="GO" id="GO:1902808">
    <property type="term" value="P:positive regulation of cell cycle G1/S phase transition"/>
    <property type="evidence" value="ECO:0000314"/>
    <property type="project" value="BHF-UCL"/>
</dbReference>
<dbReference type="GO" id="GO:0030335">
    <property type="term" value="P:positive regulation of cell migration"/>
    <property type="evidence" value="ECO:0000314"/>
    <property type="project" value="UniProtKB"/>
</dbReference>
<dbReference type="GO" id="GO:0008284">
    <property type="term" value="P:positive regulation of cell population proliferation"/>
    <property type="evidence" value="ECO:0000315"/>
    <property type="project" value="UniProtKB"/>
</dbReference>
<dbReference type="GO" id="GO:0045740">
    <property type="term" value="P:positive regulation of DNA replication"/>
    <property type="evidence" value="ECO:0000314"/>
    <property type="project" value="UniProtKB"/>
</dbReference>
<dbReference type="GO" id="GO:0045893">
    <property type="term" value="P:positive regulation of DNA-templated transcription"/>
    <property type="evidence" value="ECO:0000314"/>
    <property type="project" value="UniProtKB"/>
</dbReference>
<dbReference type="GO" id="GO:0045880">
    <property type="term" value="P:positive regulation of smoothened signaling pathway"/>
    <property type="evidence" value="ECO:0000314"/>
    <property type="project" value="UniProtKB"/>
</dbReference>
<dbReference type="GO" id="GO:0045944">
    <property type="term" value="P:positive regulation of transcription by RNA polymerase II"/>
    <property type="evidence" value="ECO:0000314"/>
    <property type="project" value="UniProtKB"/>
</dbReference>
<dbReference type="GO" id="GO:0030850">
    <property type="term" value="P:prostate gland development"/>
    <property type="evidence" value="ECO:0007669"/>
    <property type="project" value="Ensembl"/>
</dbReference>
<dbReference type="GO" id="GO:0009954">
    <property type="term" value="P:proximal/distal pattern formation"/>
    <property type="evidence" value="ECO:0007669"/>
    <property type="project" value="Ensembl"/>
</dbReference>
<dbReference type="GO" id="GO:0006355">
    <property type="term" value="P:regulation of DNA-templated transcription"/>
    <property type="evidence" value="ECO:0000314"/>
    <property type="project" value="ComplexPortal"/>
</dbReference>
<dbReference type="GO" id="GO:2000345">
    <property type="term" value="P:regulation of hepatocyte proliferation"/>
    <property type="evidence" value="ECO:0007669"/>
    <property type="project" value="Ensembl"/>
</dbReference>
<dbReference type="GO" id="GO:0045667">
    <property type="term" value="P:regulation of osteoblast differentiation"/>
    <property type="evidence" value="ECO:0007669"/>
    <property type="project" value="Ensembl"/>
</dbReference>
<dbReference type="GO" id="GO:0008589">
    <property type="term" value="P:regulation of smoothened signaling pathway"/>
    <property type="evidence" value="ECO:0000304"/>
    <property type="project" value="UniProtKB"/>
</dbReference>
<dbReference type="GO" id="GO:0006357">
    <property type="term" value="P:regulation of transcription by RNA polymerase II"/>
    <property type="evidence" value="ECO:0000318"/>
    <property type="project" value="GO_Central"/>
</dbReference>
<dbReference type="GO" id="GO:0009611">
    <property type="term" value="P:response to wounding"/>
    <property type="evidence" value="ECO:0007669"/>
    <property type="project" value="Ensembl"/>
</dbReference>
<dbReference type="GO" id="GO:0007224">
    <property type="term" value="P:smoothened signaling pathway"/>
    <property type="evidence" value="ECO:0000314"/>
    <property type="project" value="UniProtKB"/>
</dbReference>
<dbReference type="GO" id="GO:0007286">
    <property type="term" value="P:spermatid development"/>
    <property type="evidence" value="ECO:0007669"/>
    <property type="project" value="Ensembl"/>
</dbReference>
<dbReference type="GO" id="GO:0007418">
    <property type="term" value="P:ventral midline development"/>
    <property type="evidence" value="ECO:0007669"/>
    <property type="project" value="Ensembl"/>
</dbReference>
<dbReference type="FunFam" id="3.30.160.60:FF:000019">
    <property type="entry name" value="GLI family zinc finger 3"/>
    <property type="match status" value="1"/>
</dbReference>
<dbReference type="FunFam" id="3.30.160.60:FF:000031">
    <property type="entry name" value="GLI family zinc finger 3"/>
    <property type="match status" value="1"/>
</dbReference>
<dbReference type="FunFam" id="3.30.160.60:FF:000036">
    <property type="entry name" value="GLI family zinc finger 3"/>
    <property type="match status" value="1"/>
</dbReference>
<dbReference type="FunFam" id="3.30.160.60:FF:000048">
    <property type="entry name" value="GLI family zinc finger 3"/>
    <property type="match status" value="1"/>
</dbReference>
<dbReference type="FunFam" id="3.30.160.60:FF:000068">
    <property type="entry name" value="GLI family zinc finger 3"/>
    <property type="match status" value="1"/>
</dbReference>
<dbReference type="Gene3D" id="3.30.160.60">
    <property type="entry name" value="Classic Zinc Finger"/>
    <property type="match status" value="5"/>
</dbReference>
<dbReference type="InterPro" id="IPR043359">
    <property type="entry name" value="GLI-like"/>
</dbReference>
<dbReference type="InterPro" id="IPR056436">
    <property type="entry name" value="Znf-C2H2_ZIC1-5/GLI1-3-like"/>
</dbReference>
<dbReference type="InterPro" id="IPR036236">
    <property type="entry name" value="Znf_C2H2_sf"/>
</dbReference>
<dbReference type="InterPro" id="IPR013087">
    <property type="entry name" value="Znf_C2H2_type"/>
</dbReference>
<dbReference type="PANTHER" id="PTHR45718">
    <property type="entry name" value="TRANSCRIPTIONAL ACTIVATOR CUBITUS INTERRUPTUS"/>
    <property type="match status" value="1"/>
</dbReference>
<dbReference type="PANTHER" id="PTHR45718:SF2">
    <property type="entry name" value="ZINC FINGER PROTEIN GLI1"/>
    <property type="match status" value="1"/>
</dbReference>
<dbReference type="Pfam" id="PF00096">
    <property type="entry name" value="zf-C2H2"/>
    <property type="match status" value="2"/>
</dbReference>
<dbReference type="Pfam" id="PF23561">
    <property type="entry name" value="zf-C2H2_15"/>
    <property type="match status" value="1"/>
</dbReference>
<dbReference type="SMART" id="SM00355">
    <property type="entry name" value="ZnF_C2H2"/>
    <property type="match status" value="5"/>
</dbReference>
<dbReference type="SUPFAM" id="SSF57667">
    <property type="entry name" value="beta-beta-alpha zinc fingers"/>
    <property type="match status" value="3"/>
</dbReference>
<dbReference type="PROSITE" id="PS00028">
    <property type="entry name" value="ZINC_FINGER_C2H2_1"/>
    <property type="match status" value="4"/>
</dbReference>
<dbReference type="PROSITE" id="PS50157">
    <property type="entry name" value="ZINC_FINGER_C2H2_2"/>
    <property type="match status" value="5"/>
</dbReference>
<name>GLI1_HUMAN</name>
<evidence type="ECO:0000250" key="1"/>
<evidence type="ECO:0000250" key="2">
    <source>
        <dbReference type="UniProtKB" id="P47806"/>
    </source>
</evidence>
<evidence type="ECO:0000255" key="3">
    <source>
        <dbReference type="PROSITE-ProRule" id="PRU00042"/>
    </source>
</evidence>
<evidence type="ECO:0000256" key="4">
    <source>
        <dbReference type="SAM" id="MobiDB-lite"/>
    </source>
</evidence>
<evidence type="ECO:0000269" key="5">
    <source>
    </source>
</evidence>
<evidence type="ECO:0000269" key="6">
    <source>
    </source>
</evidence>
<evidence type="ECO:0000269" key="7">
    <source>
    </source>
</evidence>
<evidence type="ECO:0000269" key="8">
    <source>
    </source>
</evidence>
<evidence type="ECO:0000269" key="9">
    <source>
    </source>
</evidence>
<evidence type="ECO:0000269" key="10">
    <source>
    </source>
</evidence>
<evidence type="ECO:0000269" key="11">
    <source>
    </source>
</evidence>
<evidence type="ECO:0000269" key="12">
    <source>
    </source>
</evidence>
<evidence type="ECO:0000269" key="13">
    <source>
    </source>
</evidence>
<evidence type="ECO:0000269" key="14">
    <source>
    </source>
</evidence>
<evidence type="ECO:0000269" key="15">
    <source>
    </source>
</evidence>
<evidence type="ECO:0000269" key="16">
    <source>
    </source>
</evidence>
<evidence type="ECO:0000269" key="17">
    <source>
    </source>
</evidence>
<evidence type="ECO:0000269" key="18">
    <source>
    </source>
</evidence>
<evidence type="ECO:0000269" key="19">
    <source>
    </source>
</evidence>
<evidence type="ECO:0000269" key="20">
    <source ref="2"/>
</evidence>
<evidence type="ECO:0000303" key="21">
    <source>
    </source>
</evidence>
<evidence type="ECO:0000305" key="22"/>
<evidence type="ECO:0007744" key="23">
    <source>
    </source>
</evidence>
<evidence type="ECO:0007829" key="24">
    <source>
        <dbReference type="PDB" id="2GLI"/>
    </source>
</evidence>
<evidence type="ECO:0007829" key="25">
    <source>
        <dbReference type="PDB" id="4KMD"/>
    </source>
</evidence>
<evidence type="ECO:0007829" key="26">
    <source>
        <dbReference type="PDB" id="7T91"/>
    </source>
</evidence>
<organism>
    <name type="scientific">Homo sapiens</name>
    <name type="common">Human</name>
    <dbReference type="NCBI Taxonomy" id="9606"/>
    <lineage>
        <taxon>Eukaryota</taxon>
        <taxon>Metazoa</taxon>
        <taxon>Chordata</taxon>
        <taxon>Craniata</taxon>
        <taxon>Vertebrata</taxon>
        <taxon>Euteleostomi</taxon>
        <taxon>Mammalia</taxon>
        <taxon>Eutheria</taxon>
        <taxon>Euarchontoglires</taxon>
        <taxon>Primates</taxon>
        <taxon>Haplorrhini</taxon>
        <taxon>Catarrhini</taxon>
        <taxon>Hominidae</taxon>
        <taxon>Homo</taxon>
    </lineage>
</organism>